<evidence type="ECO:0000255" key="1">
    <source>
        <dbReference type="HAMAP-Rule" id="MF_01384"/>
    </source>
</evidence>
<feature type="chain" id="PRO_0000067625" description="Urease accessory protein UreH">
    <location>
        <begin position="1"/>
        <end position="265"/>
    </location>
</feature>
<comment type="function">
    <text evidence="1">Required for maturation of urease via the functional incorporation of the urease nickel metallocenter.</text>
</comment>
<comment type="subunit">
    <text evidence="1">UreH, UreF and UreG form a complex that acts as a GTP-hydrolysis-dependent molecular chaperone, activating the urease apoprotein by helping to assemble the nickel containing metallocenter of UreC. The UreE protein probably delivers the nickel.</text>
</comment>
<comment type="subcellular location">
    <subcellularLocation>
        <location evidence="1">Cytoplasm</location>
    </subcellularLocation>
</comment>
<comment type="similarity">
    <text evidence="1">Belongs to the UreD family.</text>
</comment>
<proteinExistence type="inferred from homology"/>
<reference key="1">
    <citation type="journal article" date="1999" name="Nature">
        <title>Genomic sequence comparison of two unrelated isolates of the human gastric pathogen Helicobacter pylori.</title>
        <authorList>
            <person name="Alm R.A."/>
            <person name="Ling L.-S.L."/>
            <person name="Moir D.T."/>
            <person name="King B.L."/>
            <person name="Brown E.D."/>
            <person name="Doig P.C."/>
            <person name="Smith D.R."/>
            <person name="Noonan B."/>
            <person name="Guild B.C."/>
            <person name="deJonge B.L."/>
            <person name="Carmel G."/>
            <person name="Tummino P.J."/>
            <person name="Caruso A."/>
            <person name="Uria-Nickelsen M."/>
            <person name="Mills D.M."/>
            <person name="Ives C."/>
            <person name="Gibson R."/>
            <person name="Merberg D."/>
            <person name="Mills S.D."/>
            <person name="Jiang Q."/>
            <person name="Taylor D.E."/>
            <person name="Vovis G.F."/>
            <person name="Trust T.J."/>
        </authorList>
    </citation>
    <scope>NUCLEOTIDE SEQUENCE [LARGE SCALE GENOMIC DNA]</scope>
    <source>
        <strain>J99 / ATCC 700824</strain>
    </source>
</reference>
<sequence length="265" mass="29732">MNTYAQESKLRLKTKIGADGRCVIEDNFFTPPFKLMAPFYPKDDLAEIMLLAVSPGLMKGDAQDMQLNIGPNCKLRITSQSFEKIHNTEDGFASRDMHIVVGENAFLDFAPFPLIPFENAHFKGNTTISLRSSSQLLYSEIIVAGRVARNELFKFNRLHTKISILQDEKPIYYDNTILDPKTTNMNNMCMFDGYTHYLNLVLVNCPIELSGARELIEESEGVDGAVSKIASSHLCLKALAKGSEPLLHLREKIARLVTQTTTQKV</sequence>
<organism>
    <name type="scientific">Helicobacter pylori (strain J99 / ATCC 700824)</name>
    <name type="common">Campylobacter pylori J99</name>
    <dbReference type="NCBI Taxonomy" id="85963"/>
    <lineage>
        <taxon>Bacteria</taxon>
        <taxon>Pseudomonadati</taxon>
        <taxon>Campylobacterota</taxon>
        <taxon>Epsilonproteobacteria</taxon>
        <taxon>Campylobacterales</taxon>
        <taxon>Helicobacteraceae</taxon>
        <taxon>Helicobacter</taxon>
    </lineage>
</organism>
<name>UREH_HELPJ</name>
<dbReference type="EMBL" id="AE001439">
    <property type="protein sequence ID" value="AAD05646.1"/>
    <property type="molecule type" value="Genomic_DNA"/>
</dbReference>
<dbReference type="PIR" id="B71979">
    <property type="entry name" value="B71979"/>
</dbReference>
<dbReference type="RefSeq" id="WP_001099400.1">
    <property type="nucleotide sequence ID" value="NC_000921.1"/>
</dbReference>
<dbReference type="SMR" id="Q9ZMZ8"/>
<dbReference type="KEGG" id="hpj:jhp_0062"/>
<dbReference type="PATRIC" id="fig|85963.30.peg.972"/>
<dbReference type="eggNOG" id="COG0829">
    <property type="taxonomic scope" value="Bacteria"/>
</dbReference>
<dbReference type="Proteomes" id="UP000000804">
    <property type="component" value="Chromosome"/>
</dbReference>
<dbReference type="GO" id="GO:0005737">
    <property type="term" value="C:cytoplasm"/>
    <property type="evidence" value="ECO:0007669"/>
    <property type="project" value="UniProtKB-SubCell"/>
</dbReference>
<dbReference type="GO" id="GO:0016151">
    <property type="term" value="F:nickel cation binding"/>
    <property type="evidence" value="ECO:0007669"/>
    <property type="project" value="InterPro"/>
</dbReference>
<dbReference type="HAMAP" id="MF_01384">
    <property type="entry name" value="UreD"/>
    <property type="match status" value="1"/>
</dbReference>
<dbReference type="InterPro" id="IPR002669">
    <property type="entry name" value="UreD"/>
</dbReference>
<dbReference type="PANTHER" id="PTHR33643">
    <property type="entry name" value="UREASE ACCESSORY PROTEIN D"/>
    <property type="match status" value="1"/>
</dbReference>
<dbReference type="PANTHER" id="PTHR33643:SF1">
    <property type="entry name" value="UREASE ACCESSORY PROTEIN D"/>
    <property type="match status" value="1"/>
</dbReference>
<dbReference type="Pfam" id="PF01774">
    <property type="entry name" value="UreD"/>
    <property type="match status" value="1"/>
</dbReference>
<protein>
    <recommendedName>
        <fullName evidence="1">Urease accessory protein UreH</fullName>
    </recommendedName>
</protein>
<accession>Q9ZMZ8</accession>
<gene>
    <name evidence="1" type="primary">ureH</name>
    <name type="ordered locus">jhp_0062</name>
</gene>
<keyword id="KW-0143">Chaperone</keyword>
<keyword id="KW-0963">Cytoplasm</keyword>
<keyword id="KW-0996">Nickel insertion</keyword>